<comment type="function">
    <text evidence="1">Catalyzes the oxidation of 5,10-methylenetetrahydrofolate to 5,10-methenyltetrahydrofolate and then the hydrolysis of 5,10-methenyltetrahydrofolate to 10-formyltetrahydrofolate.</text>
</comment>
<comment type="catalytic activity">
    <reaction evidence="1">
        <text>(6R)-5,10-methylene-5,6,7,8-tetrahydrofolate + NADP(+) = (6R)-5,10-methenyltetrahydrofolate + NADPH</text>
        <dbReference type="Rhea" id="RHEA:22812"/>
        <dbReference type="ChEBI" id="CHEBI:15636"/>
        <dbReference type="ChEBI" id="CHEBI:57455"/>
        <dbReference type="ChEBI" id="CHEBI:57783"/>
        <dbReference type="ChEBI" id="CHEBI:58349"/>
        <dbReference type="EC" id="1.5.1.5"/>
    </reaction>
</comment>
<comment type="catalytic activity">
    <reaction evidence="1">
        <text>(6R)-5,10-methenyltetrahydrofolate + H2O = (6R)-10-formyltetrahydrofolate + H(+)</text>
        <dbReference type="Rhea" id="RHEA:23700"/>
        <dbReference type="ChEBI" id="CHEBI:15377"/>
        <dbReference type="ChEBI" id="CHEBI:15378"/>
        <dbReference type="ChEBI" id="CHEBI:57455"/>
        <dbReference type="ChEBI" id="CHEBI:195366"/>
        <dbReference type="EC" id="3.5.4.9"/>
    </reaction>
</comment>
<comment type="pathway">
    <text evidence="1">One-carbon metabolism; tetrahydrofolate interconversion.</text>
</comment>
<comment type="subunit">
    <text evidence="1">Homodimer.</text>
</comment>
<comment type="similarity">
    <text evidence="1">Belongs to the tetrahydrofolate dehydrogenase/cyclohydrolase family.</text>
</comment>
<gene>
    <name evidence="1" type="primary">folD</name>
    <name type="ordered locus">azo1377</name>
</gene>
<reference key="1">
    <citation type="journal article" date="2006" name="Nat. Biotechnol.">
        <title>Complete genome of the mutualistic, N2-fixing grass endophyte Azoarcus sp. strain BH72.</title>
        <authorList>
            <person name="Krause A."/>
            <person name="Ramakumar A."/>
            <person name="Bartels D."/>
            <person name="Battistoni F."/>
            <person name="Bekel T."/>
            <person name="Boch J."/>
            <person name="Boehm M."/>
            <person name="Friedrich F."/>
            <person name="Hurek T."/>
            <person name="Krause L."/>
            <person name="Linke B."/>
            <person name="McHardy A.C."/>
            <person name="Sarkar A."/>
            <person name="Schneiker S."/>
            <person name="Syed A.A."/>
            <person name="Thauer R."/>
            <person name="Vorhoelter F.-J."/>
            <person name="Weidner S."/>
            <person name="Puehler A."/>
            <person name="Reinhold-Hurek B."/>
            <person name="Kaiser O."/>
            <person name="Goesmann A."/>
        </authorList>
    </citation>
    <scope>NUCLEOTIDE SEQUENCE [LARGE SCALE GENOMIC DNA]</scope>
    <source>
        <strain>BH72</strain>
    </source>
</reference>
<organism>
    <name type="scientific">Azoarcus sp. (strain BH72)</name>
    <dbReference type="NCBI Taxonomy" id="418699"/>
    <lineage>
        <taxon>Bacteria</taxon>
        <taxon>Pseudomonadati</taxon>
        <taxon>Pseudomonadota</taxon>
        <taxon>Betaproteobacteria</taxon>
        <taxon>Rhodocyclales</taxon>
        <taxon>Zoogloeaceae</taxon>
        <taxon>Azoarcus</taxon>
    </lineage>
</organism>
<sequence>MSARIIDGNALAARVRGEIAARAAALTDRGTQPCLAVLLVGENPASAVYVRSKVAACEKAGIRSLRFDYPQDVDPAVVMEKLAALNADPSVHGILVQLPLPPQFDEAAVLEAISVAKDVDGFHAENVGRLSQNQEAFLPCTPHGVMKMLEAEGVPLAGAEAVVIGRSNIVGKPMAMLLTNAGATVTVCHSRTRDLRFHTGRADIVVAAIGKPRFVTGDMLKPGATVIDVGINRITDGPEAGKLCGDVDFASASEVAGLITPVPGGVGPMTITMLLENTVISAERSARAAGK</sequence>
<evidence type="ECO:0000255" key="1">
    <source>
        <dbReference type="HAMAP-Rule" id="MF_01576"/>
    </source>
</evidence>
<keyword id="KW-0028">Amino-acid biosynthesis</keyword>
<keyword id="KW-0368">Histidine biosynthesis</keyword>
<keyword id="KW-0378">Hydrolase</keyword>
<keyword id="KW-0486">Methionine biosynthesis</keyword>
<keyword id="KW-0511">Multifunctional enzyme</keyword>
<keyword id="KW-0521">NADP</keyword>
<keyword id="KW-0554">One-carbon metabolism</keyword>
<keyword id="KW-0560">Oxidoreductase</keyword>
<keyword id="KW-0658">Purine biosynthesis</keyword>
<keyword id="KW-1185">Reference proteome</keyword>
<feature type="chain" id="PRO_0000305793" description="Bifunctional protein FolD">
    <location>
        <begin position="1"/>
        <end position="291"/>
    </location>
</feature>
<feature type="binding site" evidence="1">
    <location>
        <begin position="165"/>
        <end position="167"/>
    </location>
    <ligand>
        <name>NADP(+)</name>
        <dbReference type="ChEBI" id="CHEBI:58349"/>
    </ligand>
</feature>
<feature type="binding site" evidence="1">
    <location>
        <position position="190"/>
    </location>
    <ligand>
        <name>NADP(+)</name>
        <dbReference type="ChEBI" id="CHEBI:58349"/>
    </ligand>
</feature>
<feature type="binding site" evidence="1">
    <location>
        <position position="231"/>
    </location>
    <ligand>
        <name>NADP(+)</name>
        <dbReference type="ChEBI" id="CHEBI:58349"/>
    </ligand>
</feature>
<accession>A1K589</accession>
<protein>
    <recommendedName>
        <fullName evidence="1">Bifunctional protein FolD</fullName>
    </recommendedName>
    <domain>
        <recommendedName>
            <fullName evidence="1">Methylenetetrahydrofolate dehydrogenase</fullName>
            <ecNumber evidence="1">1.5.1.5</ecNumber>
        </recommendedName>
    </domain>
    <domain>
        <recommendedName>
            <fullName evidence="1">Methenyltetrahydrofolate cyclohydrolase</fullName>
            <ecNumber evidence="1">3.5.4.9</ecNumber>
        </recommendedName>
    </domain>
</protein>
<proteinExistence type="inferred from homology"/>
<name>FOLD_AZOSB</name>
<dbReference type="EC" id="1.5.1.5" evidence="1"/>
<dbReference type="EC" id="3.5.4.9" evidence="1"/>
<dbReference type="EMBL" id="AM406670">
    <property type="protein sequence ID" value="CAL93994.1"/>
    <property type="molecule type" value="Genomic_DNA"/>
</dbReference>
<dbReference type="RefSeq" id="WP_011765110.1">
    <property type="nucleotide sequence ID" value="NC_008702.1"/>
</dbReference>
<dbReference type="SMR" id="A1K589"/>
<dbReference type="STRING" id="62928.azo1377"/>
<dbReference type="KEGG" id="azo:azo1377"/>
<dbReference type="eggNOG" id="COG0190">
    <property type="taxonomic scope" value="Bacteria"/>
</dbReference>
<dbReference type="HOGENOM" id="CLU_034045_2_1_4"/>
<dbReference type="UniPathway" id="UPA00193"/>
<dbReference type="Proteomes" id="UP000002588">
    <property type="component" value="Chromosome"/>
</dbReference>
<dbReference type="GO" id="GO:0005829">
    <property type="term" value="C:cytosol"/>
    <property type="evidence" value="ECO:0007669"/>
    <property type="project" value="TreeGrafter"/>
</dbReference>
<dbReference type="GO" id="GO:0004477">
    <property type="term" value="F:methenyltetrahydrofolate cyclohydrolase activity"/>
    <property type="evidence" value="ECO:0007669"/>
    <property type="project" value="UniProtKB-UniRule"/>
</dbReference>
<dbReference type="GO" id="GO:0004488">
    <property type="term" value="F:methylenetetrahydrofolate dehydrogenase (NADP+) activity"/>
    <property type="evidence" value="ECO:0007669"/>
    <property type="project" value="UniProtKB-UniRule"/>
</dbReference>
<dbReference type="GO" id="GO:0000105">
    <property type="term" value="P:L-histidine biosynthetic process"/>
    <property type="evidence" value="ECO:0007669"/>
    <property type="project" value="UniProtKB-KW"/>
</dbReference>
<dbReference type="GO" id="GO:0009086">
    <property type="term" value="P:methionine biosynthetic process"/>
    <property type="evidence" value="ECO:0007669"/>
    <property type="project" value="UniProtKB-KW"/>
</dbReference>
<dbReference type="GO" id="GO:0006164">
    <property type="term" value="P:purine nucleotide biosynthetic process"/>
    <property type="evidence" value="ECO:0007669"/>
    <property type="project" value="UniProtKB-KW"/>
</dbReference>
<dbReference type="GO" id="GO:0035999">
    <property type="term" value="P:tetrahydrofolate interconversion"/>
    <property type="evidence" value="ECO:0007669"/>
    <property type="project" value="UniProtKB-UniRule"/>
</dbReference>
<dbReference type="CDD" id="cd01080">
    <property type="entry name" value="NAD_bind_m-THF_DH_Cyclohyd"/>
    <property type="match status" value="1"/>
</dbReference>
<dbReference type="FunFam" id="3.40.50.720:FF:000006">
    <property type="entry name" value="Bifunctional protein FolD"/>
    <property type="match status" value="1"/>
</dbReference>
<dbReference type="FunFam" id="3.40.50.10860:FF:000005">
    <property type="entry name" value="C-1-tetrahydrofolate synthase, cytoplasmic, putative"/>
    <property type="match status" value="1"/>
</dbReference>
<dbReference type="Gene3D" id="3.40.50.10860">
    <property type="entry name" value="Leucine Dehydrogenase, chain A, domain 1"/>
    <property type="match status" value="1"/>
</dbReference>
<dbReference type="Gene3D" id="3.40.50.720">
    <property type="entry name" value="NAD(P)-binding Rossmann-like Domain"/>
    <property type="match status" value="1"/>
</dbReference>
<dbReference type="HAMAP" id="MF_01576">
    <property type="entry name" value="THF_DHG_CYH"/>
    <property type="match status" value="1"/>
</dbReference>
<dbReference type="InterPro" id="IPR046346">
    <property type="entry name" value="Aminoacid_DH-like_N_sf"/>
</dbReference>
<dbReference type="InterPro" id="IPR036291">
    <property type="entry name" value="NAD(P)-bd_dom_sf"/>
</dbReference>
<dbReference type="InterPro" id="IPR000672">
    <property type="entry name" value="THF_DH/CycHdrlase"/>
</dbReference>
<dbReference type="InterPro" id="IPR020630">
    <property type="entry name" value="THF_DH/CycHdrlase_cat_dom"/>
</dbReference>
<dbReference type="InterPro" id="IPR020867">
    <property type="entry name" value="THF_DH/CycHdrlase_CS"/>
</dbReference>
<dbReference type="InterPro" id="IPR020631">
    <property type="entry name" value="THF_DH/CycHdrlase_NAD-bd_dom"/>
</dbReference>
<dbReference type="NCBIfam" id="NF008058">
    <property type="entry name" value="PRK10792.1"/>
    <property type="match status" value="1"/>
</dbReference>
<dbReference type="NCBIfam" id="NF010783">
    <property type="entry name" value="PRK14186.1"/>
    <property type="match status" value="1"/>
</dbReference>
<dbReference type="NCBIfam" id="NF010786">
    <property type="entry name" value="PRK14189.1"/>
    <property type="match status" value="1"/>
</dbReference>
<dbReference type="PANTHER" id="PTHR48099:SF5">
    <property type="entry name" value="C-1-TETRAHYDROFOLATE SYNTHASE, CYTOPLASMIC"/>
    <property type="match status" value="1"/>
</dbReference>
<dbReference type="PANTHER" id="PTHR48099">
    <property type="entry name" value="C-1-TETRAHYDROFOLATE SYNTHASE, CYTOPLASMIC-RELATED"/>
    <property type="match status" value="1"/>
</dbReference>
<dbReference type="Pfam" id="PF00763">
    <property type="entry name" value="THF_DHG_CYH"/>
    <property type="match status" value="1"/>
</dbReference>
<dbReference type="Pfam" id="PF02882">
    <property type="entry name" value="THF_DHG_CYH_C"/>
    <property type="match status" value="1"/>
</dbReference>
<dbReference type="PRINTS" id="PR00085">
    <property type="entry name" value="THFDHDRGNASE"/>
</dbReference>
<dbReference type="SUPFAM" id="SSF53223">
    <property type="entry name" value="Aminoacid dehydrogenase-like, N-terminal domain"/>
    <property type="match status" value="1"/>
</dbReference>
<dbReference type="SUPFAM" id="SSF51735">
    <property type="entry name" value="NAD(P)-binding Rossmann-fold domains"/>
    <property type="match status" value="1"/>
</dbReference>
<dbReference type="PROSITE" id="PS00767">
    <property type="entry name" value="THF_DHG_CYH_2"/>
    <property type="match status" value="1"/>
</dbReference>